<evidence type="ECO:0000250" key="1"/>
<evidence type="ECO:0000250" key="2">
    <source>
        <dbReference type="UniProtKB" id="Q8CFP6"/>
    </source>
</evidence>
<evidence type="ECO:0000255" key="3">
    <source>
        <dbReference type="PROSITE-ProRule" id="PRU00286"/>
    </source>
</evidence>
<evidence type="ECO:0000305" key="4"/>
<keyword id="KW-0342">GTP-binding</keyword>
<keyword id="KW-0547">Nucleotide-binding</keyword>
<keyword id="KW-0539">Nucleus</keyword>
<keyword id="KW-1185">Reference proteome</keyword>
<sequence length="276" mass="31278">MESHLQKRKDSRKPLRIKVISMGNAEVGKSCIIKRYCEKRFVPKYQATIGIDYGVTKVQIKDREIKVNIFDMAGHPFFYEVRNEFYKDTQGVILVYDVGQKESFESLDAWLAEMKQELGPQINIDNLDNIVFAVCANKIDSTKHRCVDESEGRLWSESKGFLYFETSAQSGEGINEMFQAFYSSIVDLCDNGGKRPVSAINIGFTKEQADSIRRIRNSKDSWDMLGVKPGATRDEVNKAYRKLAVLLHPDKCVAPGSEDAFKAVVNARTALLKNIK</sequence>
<proteinExistence type="evidence at transcript level"/>
<reference key="1">
    <citation type="submission" date="2004-12" db="EMBL/GenBank/DDBJ databases">
        <authorList>
            <consortium name="NIH - Xenopus Gene Collection (XGC) project"/>
        </authorList>
    </citation>
    <scope>NUCLEOTIDE SEQUENCE [LARGE SCALE MRNA]</scope>
    <source>
        <tissue>Testis</tissue>
    </source>
</reference>
<reference key="2">
    <citation type="submission" date="2006-01" db="EMBL/GenBank/DDBJ databases">
        <title>WashU-NCI Xenopus EST project.</title>
        <authorList>
            <person name="Clifton S."/>
            <person name="Johnson S.L."/>
            <person name="Blumberg B."/>
            <person name="Song J."/>
            <person name="Hillier L."/>
            <person name="Pape D."/>
            <person name="Martin J."/>
            <person name="Wylie T."/>
            <person name="Underwood K."/>
            <person name="Theising B."/>
            <person name="Bowers Y."/>
            <person name="Person B."/>
            <person name="Gibbons M."/>
            <person name="Harvey N."/>
            <person name="Ritter E."/>
            <person name="Jackson Y."/>
            <person name="McCann R."/>
            <person name="Waterston R."/>
            <person name="Wilson R."/>
        </authorList>
    </citation>
    <scope>NUCLEOTIDE SEQUENCE [MRNA] OF 30-178</scope>
</reference>
<reference key="3">
    <citation type="journal article" date="2004" name="Gene">
        <title>RJLs: a new family of Ras-related GTP-binding proteins.</title>
        <authorList>
            <person name="Nepomuceno-Silva J.L."/>
            <person name="de Melo L.D."/>
            <person name="Mendonca S.M."/>
            <person name="Paixao J.C."/>
            <person name="Lopes U.G."/>
        </authorList>
    </citation>
    <scope>IDENTIFICATION</scope>
</reference>
<organism>
    <name type="scientific">Xenopus laevis</name>
    <name type="common">African clawed frog</name>
    <dbReference type="NCBI Taxonomy" id="8355"/>
    <lineage>
        <taxon>Eukaryota</taxon>
        <taxon>Metazoa</taxon>
        <taxon>Chordata</taxon>
        <taxon>Craniata</taxon>
        <taxon>Vertebrata</taxon>
        <taxon>Euteleostomi</taxon>
        <taxon>Amphibia</taxon>
        <taxon>Batrachia</taxon>
        <taxon>Anura</taxon>
        <taxon>Pipoidea</taxon>
        <taxon>Pipidae</taxon>
        <taxon>Xenopodinae</taxon>
        <taxon>Xenopus</taxon>
        <taxon>Xenopus</taxon>
    </lineage>
</organism>
<dbReference type="EMBL" id="BC088700">
    <property type="protein sequence ID" value="AAH88700.1"/>
    <property type="molecule type" value="mRNA"/>
</dbReference>
<dbReference type="EMBL" id="BE025902">
    <property type="status" value="NOT_ANNOTATED_CDS"/>
    <property type="molecule type" value="mRNA"/>
</dbReference>
<dbReference type="EMBL" id="BK001291">
    <property type="protein sequence ID" value="DAA01330.1"/>
    <property type="molecule type" value="mRNA"/>
</dbReference>
<dbReference type="RefSeq" id="NP_001088891.1">
    <property type="nucleotide sequence ID" value="NM_001095422.1"/>
</dbReference>
<dbReference type="SMR" id="Q5M7D1"/>
<dbReference type="DNASU" id="496237"/>
<dbReference type="GeneID" id="496237"/>
<dbReference type="KEGG" id="xla:496237"/>
<dbReference type="AGR" id="Xenbase:XB-GENE-490424"/>
<dbReference type="CTD" id="496237"/>
<dbReference type="Xenbase" id="XB-GENE-490424">
    <property type="gene designation" value="dnajc27.S"/>
</dbReference>
<dbReference type="OMA" id="NMENVVF"/>
<dbReference type="OrthoDB" id="8830751at2759"/>
<dbReference type="Proteomes" id="UP000186698">
    <property type="component" value="Chromosome 5S"/>
</dbReference>
<dbReference type="Bgee" id="496237">
    <property type="expression patterns" value="Expressed in brain and 19 other cell types or tissues"/>
</dbReference>
<dbReference type="GO" id="GO:0005770">
    <property type="term" value="C:late endosome"/>
    <property type="evidence" value="ECO:0007669"/>
    <property type="project" value="TreeGrafter"/>
</dbReference>
<dbReference type="GO" id="GO:0005764">
    <property type="term" value="C:lysosome"/>
    <property type="evidence" value="ECO:0007669"/>
    <property type="project" value="TreeGrafter"/>
</dbReference>
<dbReference type="GO" id="GO:0005634">
    <property type="term" value="C:nucleus"/>
    <property type="evidence" value="ECO:0007669"/>
    <property type="project" value="UniProtKB-SubCell"/>
</dbReference>
<dbReference type="GO" id="GO:0045335">
    <property type="term" value="C:phagocytic vesicle"/>
    <property type="evidence" value="ECO:0007669"/>
    <property type="project" value="TreeGrafter"/>
</dbReference>
<dbReference type="GO" id="GO:0005525">
    <property type="term" value="F:GTP binding"/>
    <property type="evidence" value="ECO:0000318"/>
    <property type="project" value="GO_Central"/>
</dbReference>
<dbReference type="GO" id="GO:0003924">
    <property type="term" value="F:GTPase activity"/>
    <property type="evidence" value="ECO:0000318"/>
    <property type="project" value="GO_Central"/>
</dbReference>
<dbReference type="GO" id="GO:0090385">
    <property type="term" value="P:phagosome-lysosome fusion"/>
    <property type="evidence" value="ECO:0007669"/>
    <property type="project" value="TreeGrafter"/>
</dbReference>
<dbReference type="GO" id="GO:0016192">
    <property type="term" value="P:vesicle-mediated transport"/>
    <property type="evidence" value="ECO:0000318"/>
    <property type="project" value="GO_Central"/>
</dbReference>
<dbReference type="CDD" id="cd06257">
    <property type="entry name" value="DnaJ"/>
    <property type="match status" value="1"/>
</dbReference>
<dbReference type="CDD" id="cd04119">
    <property type="entry name" value="RJL"/>
    <property type="match status" value="1"/>
</dbReference>
<dbReference type="FunFam" id="3.40.50.300:FF:000697">
    <property type="entry name" value="DnaJ homolog subfamily C member 27"/>
    <property type="match status" value="1"/>
</dbReference>
<dbReference type="FunFam" id="1.10.287.110:FF:000019">
    <property type="entry name" value="dnaJ homolog subfamily C member 27"/>
    <property type="match status" value="1"/>
</dbReference>
<dbReference type="Gene3D" id="1.10.287.110">
    <property type="entry name" value="DnaJ domain"/>
    <property type="match status" value="1"/>
</dbReference>
<dbReference type="Gene3D" id="3.40.50.300">
    <property type="entry name" value="P-loop containing nucleotide triphosphate hydrolases"/>
    <property type="match status" value="1"/>
</dbReference>
<dbReference type="InterPro" id="IPR001623">
    <property type="entry name" value="DnaJ_domain"/>
</dbReference>
<dbReference type="InterPro" id="IPR036869">
    <property type="entry name" value="J_dom_sf"/>
</dbReference>
<dbReference type="InterPro" id="IPR027417">
    <property type="entry name" value="P-loop_NTPase"/>
</dbReference>
<dbReference type="InterPro" id="IPR005225">
    <property type="entry name" value="Small_GTP-bd"/>
</dbReference>
<dbReference type="InterPro" id="IPR001806">
    <property type="entry name" value="Small_GTPase"/>
</dbReference>
<dbReference type="NCBIfam" id="TIGR00231">
    <property type="entry name" value="small_GTP"/>
    <property type="match status" value="1"/>
</dbReference>
<dbReference type="PANTHER" id="PTHR47981">
    <property type="entry name" value="RAB FAMILY"/>
    <property type="match status" value="1"/>
</dbReference>
<dbReference type="PANTHER" id="PTHR47981:SF20">
    <property type="entry name" value="RAS-RELATED PROTEIN RAB-7A"/>
    <property type="match status" value="1"/>
</dbReference>
<dbReference type="Pfam" id="PF00226">
    <property type="entry name" value="DnaJ"/>
    <property type="match status" value="1"/>
</dbReference>
<dbReference type="Pfam" id="PF00071">
    <property type="entry name" value="Ras"/>
    <property type="match status" value="1"/>
</dbReference>
<dbReference type="PRINTS" id="PR00625">
    <property type="entry name" value="JDOMAIN"/>
</dbReference>
<dbReference type="PRINTS" id="PR00449">
    <property type="entry name" value="RASTRNSFRMNG"/>
</dbReference>
<dbReference type="SMART" id="SM00271">
    <property type="entry name" value="DnaJ"/>
    <property type="match status" value="1"/>
</dbReference>
<dbReference type="SMART" id="SM00175">
    <property type="entry name" value="RAB"/>
    <property type="match status" value="1"/>
</dbReference>
<dbReference type="SMART" id="SM00173">
    <property type="entry name" value="RAS"/>
    <property type="match status" value="1"/>
</dbReference>
<dbReference type="SMART" id="SM00174">
    <property type="entry name" value="RHO"/>
    <property type="match status" value="1"/>
</dbReference>
<dbReference type="SUPFAM" id="SSF46565">
    <property type="entry name" value="Chaperone J-domain"/>
    <property type="match status" value="1"/>
</dbReference>
<dbReference type="SUPFAM" id="SSF52540">
    <property type="entry name" value="P-loop containing nucleoside triphosphate hydrolases"/>
    <property type="match status" value="1"/>
</dbReference>
<dbReference type="PROSITE" id="PS50076">
    <property type="entry name" value="DNAJ_2"/>
    <property type="match status" value="1"/>
</dbReference>
<dbReference type="PROSITE" id="PS51419">
    <property type="entry name" value="RAB"/>
    <property type="match status" value="1"/>
</dbReference>
<accession>Q5M7D1</accession>
<accession>Q6IML2</accession>
<comment type="function">
    <text evidence="2">GTPase possibly involved in regulation of the MEK/ERK pathway.</text>
</comment>
<comment type="subcellular location">
    <subcellularLocation>
        <location evidence="2">Nucleus</location>
    </subcellularLocation>
</comment>
<comment type="similarity">
    <text evidence="4">Belongs to the small GTPase superfamily. Rab family.</text>
</comment>
<protein>
    <recommendedName>
        <fullName>DnaJ homolog subfamily C member 27-B</fullName>
    </recommendedName>
    <alternativeName>
        <fullName>Rab and DnaJ domain-containing protein 2</fullName>
    </alternativeName>
    <alternativeName>
        <fullName>Rab and DnaJ domain-containing protein B</fullName>
    </alternativeName>
</protein>
<name>DJ27B_XENLA</name>
<feature type="chain" id="PRO_0000332982" description="DnaJ homolog subfamily C member 27-B">
    <location>
        <begin position="1"/>
        <end position="276"/>
    </location>
</feature>
<feature type="domain" description="J" evidence="3">
    <location>
        <begin position="220"/>
        <end position="276"/>
    </location>
</feature>
<feature type="binding site" evidence="1">
    <location>
        <begin position="23"/>
        <end position="30"/>
    </location>
    <ligand>
        <name>GTP</name>
        <dbReference type="ChEBI" id="CHEBI:37565"/>
    </ligand>
</feature>
<feature type="binding site" evidence="1">
    <location>
        <begin position="71"/>
        <end position="75"/>
    </location>
    <ligand>
        <name>GTP</name>
        <dbReference type="ChEBI" id="CHEBI:37565"/>
    </ligand>
</feature>
<feature type="binding site" evidence="1">
    <location>
        <begin position="137"/>
        <end position="140"/>
    </location>
    <ligand>
        <name>GTP</name>
        <dbReference type="ChEBI" id="CHEBI:37565"/>
    </ligand>
</feature>
<feature type="sequence conflict" description="In Ref. 2; BE025902." evidence="4" ref="2">
    <original>F</original>
    <variation>S</variation>
    <location>
        <position position="78"/>
    </location>
</feature>
<gene>
    <name type="primary">dnajc27-b</name>
    <name type="synonym">rbj2</name>
    <name type="synonym">rjb-b</name>
</gene>